<organism>
    <name type="scientific">Streptococcus pneumoniae (strain CGSP14)</name>
    <dbReference type="NCBI Taxonomy" id="516950"/>
    <lineage>
        <taxon>Bacteria</taxon>
        <taxon>Bacillati</taxon>
        <taxon>Bacillota</taxon>
        <taxon>Bacilli</taxon>
        <taxon>Lactobacillales</taxon>
        <taxon>Streptococcaceae</taxon>
        <taxon>Streptococcus</taxon>
    </lineage>
</organism>
<name>SYE_STRPS</name>
<protein>
    <recommendedName>
        <fullName evidence="1">Glutamate--tRNA ligase</fullName>
        <ecNumber evidence="1">6.1.1.17</ecNumber>
    </recommendedName>
    <alternativeName>
        <fullName evidence="1">Glutamyl-tRNA synthetase</fullName>
        <shortName evidence="1">GluRS</shortName>
    </alternativeName>
</protein>
<sequence length="486" mass="55853">MSKDIRVRYAPSPTGVVHIGNARTALFNYLYARHHGGTFLIRIEDTDRKRHVEDGERSQLENLRWLGMDWDESPESHENYRQSERLDLYQKYIDQLLAEGKAYKSYVTEEELAAERERQEAAGETPRYINEYLGMSEEEKAAYIAEREAAGIIPTVRLAVNESGIYKWHDMVKGDIEFEGGNIGGDWVIQKKDGYPTYNFAVVIDDHDMQISHVIRGDDHIANTPKQLMVYEALGWEAPEFGHMTLIINSETGKKLSKRDTNTLQFIEDYRKKGYLPEAVFNFIALLGWNPGGEDEIFSREELIKLFDENRLSKSPAAFDQKKLDWMSNDYIKNADLETIFEMAKPFLEEAGRLTDKAEKLVELYKPQMKSVDEIIPLTDLFFSDFPELTEAEREVMTGETVPTVLEAFKAKLEAMTDDEFVTENIFPQIKAVQKETGIKGKNLFMPIRIAVSGEMHGPELPDTIFLLGREKSIQHIENILKEISK</sequence>
<proteinExistence type="inferred from homology"/>
<comment type="function">
    <text evidence="1">Catalyzes the attachment of glutamate to tRNA(Glu) in a two-step reaction: glutamate is first activated by ATP to form Glu-AMP and then transferred to the acceptor end of tRNA(Glu).</text>
</comment>
<comment type="catalytic activity">
    <reaction evidence="1">
        <text>tRNA(Glu) + L-glutamate + ATP = L-glutamyl-tRNA(Glu) + AMP + diphosphate</text>
        <dbReference type="Rhea" id="RHEA:23540"/>
        <dbReference type="Rhea" id="RHEA-COMP:9663"/>
        <dbReference type="Rhea" id="RHEA-COMP:9680"/>
        <dbReference type="ChEBI" id="CHEBI:29985"/>
        <dbReference type="ChEBI" id="CHEBI:30616"/>
        <dbReference type="ChEBI" id="CHEBI:33019"/>
        <dbReference type="ChEBI" id="CHEBI:78442"/>
        <dbReference type="ChEBI" id="CHEBI:78520"/>
        <dbReference type="ChEBI" id="CHEBI:456215"/>
        <dbReference type="EC" id="6.1.1.17"/>
    </reaction>
</comment>
<comment type="subunit">
    <text evidence="1">Monomer.</text>
</comment>
<comment type="subcellular location">
    <subcellularLocation>
        <location evidence="1">Cytoplasm</location>
    </subcellularLocation>
</comment>
<comment type="similarity">
    <text evidence="1">Belongs to the class-I aminoacyl-tRNA synthetase family. Glutamate--tRNA ligase type 1 subfamily.</text>
</comment>
<keyword id="KW-0030">Aminoacyl-tRNA synthetase</keyword>
<keyword id="KW-0067">ATP-binding</keyword>
<keyword id="KW-0963">Cytoplasm</keyword>
<keyword id="KW-0436">Ligase</keyword>
<keyword id="KW-0547">Nucleotide-binding</keyword>
<keyword id="KW-0648">Protein biosynthesis</keyword>
<reference key="1">
    <citation type="journal article" date="2009" name="BMC Genomics">
        <title>Genome evolution driven by host adaptations results in a more virulent and antimicrobial-resistant Streptococcus pneumoniae serotype 14.</title>
        <authorList>
            <person name="Ding F."/>
            <person name="Tang P."/>
            <person name="Hsu M.-H."/>
            <person name="Cui P."/>
            <person name="Hu S."/>
            <person name="Yu J."/>
            <person name="Chiu C.-H."/>
        </authorList>
    </citation>
    <scope>NUCLEOTIDE SEQUENCE [LARGE SCALE GENOMIC DNA]</scope>
    <source>
        <strain>CGSP14</strain>
    </source>
</reference>
<gene>
    <name evidence="1" type="primary">gltX</name>
    <name type="ordered locus">SPCG_2036</name>
</gene>
<dbReference type="EC" id="6.1.1.17" evidence="1"/>
<dbReference type="EMBL" id="CP001033">
    <property type="protein sequence ID" value="ACB91288.1"/>
    <property type="molecule type" value="Genomic_DNA"/>
</dbReference>
<dbReference type="RefSeq" id="WP_000031100.1">
    <property type="nucleotide sequence ID" value="NC_010582.1"/>
</dbReference>
<dbReference type="SMR" id="B2IMY9"/>
<dbReference type="KEGG" id="spw:SPCG_2036"/>
<dbReference type="HOGENOM" id="CLU_015768_6_1_9"/>
<dbReference type="GO" id="GO:0005829">
    <property type="term" value="C:cytosol"/>
    <property type="evidence" value="ECO:0007669"/>
    <property type="project" value="TreeGrafter"/>
</dbReference>
<dbReference type="GO" id="GO:0005524">
    <property type="term" value="F:ATP binding"/>
    <property type="evidence" value="ECO:0007669"/>
    <property type="project" value="UniProtKB-UniRule"/>
</dbReference>
<dbReference type="GO" id="GO:0004818">
    <property type="term" value="F:glutamate-tRNA ligase activity"/>
    <property type="evidence" value="ECO:0007669"/>
    <property type="project" value="UniProtKB-UniRule"/>
</dbReference>
<dbReference type="GO" id="GO:0000049">
    <property type="term" value="F:tRNA binding"/>
    <property type="evidence" value="ECO:0007669"/>
    <property type="project" value="InterPro"/>
</dbReference>
<dbReference type="GO" id="GO:0008270">
    <property type="term" value="F:zinc ion binding"/>
    <property type="evidence" value="ECO:0007669"/>
    <property type="project" value="InterPro"/>
</dbReference>
<dbReference type="GO" id="GO:0006424">
    <property type="term" value="P:glutamyl-tRNA aminoacylation"/>
    <property type="evidence" value="ECO:0007669"/>
    <property type="project" value="UniProtKB-UniRule"/>
</dbReference>
<dbReference type="CDD" id="cd00808">
    <property type="entry name" value="GluRS_core"/>
    <property type="match status" value="1"/>
</dbReference>
<dbReference type="FunFam" id="1.10.10.350:FF:000002">
    <property type="entry name" value="Glutamate--tRNA ligase"/>
    <property type="match status" value="1"/>
</dbReference>
<dbReference type="FunFam" id="3.40.50.620:FF:000007">
    <property type="entry name" value="Glutamate--tRNA ligase"/>
    <property type="match status" value="1"/>
</dbReference>
<dbReference type="Gene3D" id="1.10.10.350">
    <property type="match status" value="1"/>
</dbReference>
<dbReference type="Gene3D" id="3.40.50.620">
    <property type="entry name" value="HUPs"/>
    <property type="match status" value="1"/>
</dbReference>
<dbReference type="HAMAP" id="MF_00022">
    <property type="entry name" value="Glu_tRNA_synth_type1"/>
    <property type="match status" value="1"/>
</dbReference>
<dbReference type="InterPro" id="IPR045462">
    <property type="entry name" value="aa-tRNA-synth_I_cd-bd"/>
</dbReference>
<dbReference type="InterPro" id="IPR020751">
    <property type="entry name" value="aa-tRNA-synth_I_codon-bd_sub2"/>
</dbReference>
<dbReference type="InterPro" id="IPR001412">
    <property type="entry name" value="aa-tRNA-synth_I_CS"/>
</dbReference>
<dbReference type="InterPro" id="IPR008925">
    <property type="entry name" value="aa_tRNA-synth_I_cd-bd_sf"/>
</dbReference>
<dbReference type="InterPro" id="IPR004527">
    <property type="entry name" value="Glu-tRNA-ligase_bac/mito"/>
</dbReference>
<dbReference type="InterPro" id="IPR000924">
    <property type="entry name" value="Glu/Gln-tRNA-synth"/>
</dbReference>
<dbReference type="InterPro" id="IPR020058">
    <property type="entry name" value="Glu/Gln-tRNA-synth_Ib_cat-dom"/>
</dbReference>
<dbReference type="InterPro" id="IPR049940">
    <property type="entry name" value="GluQ/Sye"/>
</dbReference>
<dbReference type="InterPro" id="IPR033910">
    <property type="entry name" value="GluRS_core"/>
</dbReference>
<dbReference type="InterPro" id="IPR014729">
    <property type="entry name" value="Rossmann-like_a/b/a_fold"/>
</dbReference>
<dbReference type="NCBIfam" id="TIGR00464">
    <property type="entry name" value="gltX_bact"/>
    <property type="match status" value="1"/>
</dbReference>
<dbReference type="PANTHER" id="PTHR43311">
    <property type="entry name" value="GLUTAMATE--TRNA LIGASE"/>
    <property type="match status" value="1"/>
</dbReference>
<dbReference type="PANTHER" id="PTHR43311:SF2">
    <property type="entry name" value="GLUTAMATE--TRNA LIGASE, MITOCHONDRIAL-RELATED"/>
    <property type="match status" value="1"/>
</dbReference>
<dbReference type="Pfam" id="PF19269">
    <property type="entry name" value="Anticodon_2"/>
    <property type="match status" value="1"/>
</dbReference>
<dbReference type="Pfam" id="PF00749">
    <property type="entry name" value="tRNA-synt_1c"/>
    <property type="match status" value="1"/>
</dbReference>
<dbReference type="PRINTS" id="PR00987">
    <property type="entry name" value="TRNASYNTHGLU"/>
</dbReference>
<dbReference type="SUPFAM" id="SSF48163">
    <property type="entry name" value="An anticodon-binding domain of class I aminoacyl-tRNA synthetases"/>
    <property type="match status" value="1"/>
</dbReference>
<dbReference type="SUPFAM" id="SSF52374">
    <property type="entry name" value="Nucleotidylyl transferase"/>
    <property type="match status" value="1"/>
</dbReference>
<dbReference type="PROSITE" id="PS00178">
    <property type="entry name" value="AA_TRNA_LIGASE_I"/>
    <property type="match status" value="1"/>
</dbReference>
<feature type="chain" id="PRO_1000090114" description="Glutamate--tRNA ligase">
    <location>
        <begin position="1"/>
        <end position="486"/>
    </location>
</feature>
<feature type="short sequence motif" description="'HIGH' region" evidence="1">
    <location>
        <begin position="11"/>
        <end position="21"/>
    </location>
</feature>
<feature type="short sequence motif" description="'KMSKS' region" evidence="1">
    <location>
        <begin position="255"/>
        <end position="259"/>
    </location>
</feature>
<feature type="binding site" evidence="1">
    <location>
        <position position="258"/>
    </location>
    <ligand>
        <name>ATP</name>
        <dbReference type="ChEBI" id="CHEBI:30616"/>
    </ligand>
</feature>
<accession>B2IMY9</accession>
<evidence type="ECO:0000255" key="1">
    <source>
        <dbReference type="HAMAP-Rule" id="MF_00022"/>
    </source>
</evidence>